<organism>
    <name type="scientific">Pseudomonas putida (strain ATCC 47054 / DSM 6125 / CFBP 8728 / NCIMB 11950 / KT2440)</name>
    <dbReference type="NCBI Taxonomy" id="160488"/>
    <lineage>
        <taxon>Bacteria</taxon>
        <taxon>Pseudomonadati</taxon>
        <taxon>Pseudomonadota</taxon>
        <taxon>Gammaproteobacteria</taxon>
        <taxon>Pseudomonadales</taxon>
        <taxon>Pseudomonadaceae</taxon>
        <taxon>Pseudomonas</taxon>
    </lineage>
</organism>
<name>FADA_PSEPK</name>
<keyword id="KW-0012">Acyltransferase</keyword>
<keyword id="KW-0963">Cytoplasm</keyword>
<keyword id="KW-0276">Fatty acid metabolism</keyword>
<keyword id="KW-0442">Lipid degradation</keyword>
<keyword id="KW-0443">Lipid metabolism</keyword>
<keyword id="KW-1185">Reference proteome</keyword>
<keyword id="KW-0808">Transferase</keyword>
<reference key="1">
    <citation type="journal article" date="2002" name="Environ. Microbiol.">
        <title>Complete genome sequence and comparative analysis of the metabolically versatile Pseudomonas putida KT2440.</title>
        <authorList>
            <person name="Nelson K.E."/>
            <person name="Weinel C."/>
            <person name="Paulsen I.T."/>
            <person name="Dodson R.J."/>
            <person name="Hilbert H."/>
            <person name="Martins dos Santos V.A.P."/>
            <person name="Fouts D.E."/>
            <person name="Gill S.R."/>
            <person name="Pop M."/>
            <person name="Holmes M."/>
            <person name="Brinkac L.M."/>
            <person name="Beanan M.J."/>
            <person name="DeBoy R.T."/>
            <person name="Daugherty S.C."/>
            <person name="Kolonay J.F."/>
            <person name="Madupu R."/>
            <person name="Nelson W.C."/>
            <person name="White O."/>
            <person name="Peterson J.D."/>
            <person name="Khouri H.M."/>
            <person name="Hance I."/>
            <person name="Chris Lee P."/>
            <person name="Holtzapple E.K."/>
            <person name="Scanlan D."/>
            <person name="Tran K."/>
            <person name="Moazzez A."/>
            <person name="Utterback T.R."/>
            <person name="Rizzo M."/>
            <person name="Lee K."/>
            <person name="Kosack D."/>
            <person name="Moestl D."/>
            <person name="Wedler H."/>
            <person name="Lauber J."/>
            <person name="Stjepandic D."/>
            <person name="Hoheisel J."/>
            <person name="Straetz M."/>
            <person name="Heim S."/>
            <person name="Kiewitz C."/>
            <person name="Eisen J.A."/>
            <person name="Timmis K.N."/>
            <person name="Duesterhoeft A."/>
            <person name="Tuemmler B."/>
            <person name="Fraser C.M."/>
        </authorList>
    </citation>
    <scope>NUCLEOTIDE SEQUENCE [LARGE SCALE GENOMIC DNA]</scope>
    <source>
        <strain>ATCC 47054 / DSM 6125 / CFBP 8728 / NCIMB 11950 / KT2440</strain>
    </source>
</reference>
<feature type="chain" id="PRO_0000206383" description="3-ketoacyl-CoA thiolase">
    <location>
        <begin position="1"/>
        <end position="391"/>
    </location>
</feature>
<feature type="active site" description="Acyl-thioester intermediate" evidence="1">
    <location>
        <position position="95"/>
    </location>
</feature>
<feature type="active site" description="Proton acceptor" evidence="1">
    <location>
        <position position="347"/>
    </location>
</feature>
<feature type="active site" description="Proton acceptor" evidence="1">
    <location>
        <position position="377"/>
    </location>
</feature>
<accession>Q88L01</accession>
<dbReference type="EC" id="2.3.1.16" evidence="1"/>
<dbReference type="EMBL" id="AE015451">
    <property type="protein sequence ID" value="AAN67750.1"/>
    <property type="molecule type" value="Genomic_DNA"/>
</dbReference>
<dbReference type="RefSeq" id="NP_744286.1">
    <property type="nucleotide sequence ID" value="NC_002947.4"/>
</dbReference>
<dbReference type="RefSeq" id="WP_010953128.1">
    <property type="nucleotide sequence ID" value="NZ_CP169744.1"/>
</dbReference>
<dbReference type="SMR" id="Q88L01"/>
<dbReference type="STRING" id="160488.PP_2137"/>
<dbReference type="PaxDb" id="160488-PP_2137"/>
<dbReference type="GeneID" id="83681342"/>
<dbReference type="KEGG" id="ppu:PP_2137"/>
<dbReference type="PATRIC" id="fig|160488.4.peg.2254"/>
<dbReference type="eggNOG" id="COG0183">
    <property type="taxonomic scope" value="Bacteria"/>
</dbReference>
<dbReference type="HOGENOM" id="CLU_031026_2_3_6"/>
<dbReference type="OrthoDB" id="8951704at2"/>
<dbReference type="PhylomeDB" id="Q88L01"/>
<dbReference type="BioCyc" id="MetaCyc:G1G01-2278-MONOMER"/>
<dbReference type="BioCyc" id="PPUT160488:G1G01-2278-MONOMER"/>
<dbReference type="UniPathway" id="UPA00659"/>
<dbReference type="Proteomes" id="UP000000556">
    <property type="component" value="Chromosome"/>
</dbReference>
<dbReference type="GO" id="GO:0005737">
    <property type="term" value="C:cytoplasm"/>
    <property type="evidence" value="ECO:0007669"/>
    <property type="project" value="UniProtKB-SubCell"/>
</dbReference>
<dbReference type="GO" id="GO:0003988">
    <property type="term" value="F:acetyl-CoA C-acyltransferase activity"/>
    <property type="evidence" value="ECO:0007669"/>
    <property type="project" value="UniProtKB-UniRule"/>
</dbReference>
<dbReference type="GO" id="GO:0006635">
    <property type="term" value="P:fatty acid beta-oxidation"/>
    <property type="evidence" value="ECO:0007669"/>
    <property type="project" value="UniProtKB-UniRule"/>
</dbReference>
<dbReference type="GO" id="GO:0010124">
    <property type="term" value="P:phenylacetate catabolic process"/>
    <property type="evidence" value="ECO:0007669"/>
    <property type="project" value="TreeGrafter"/>
</dbReference>
<dbReference type="CDD" id="cd00751">
    <property type="entry name" value="thiolase"/>
    <property type="match status" value="1"/>
</dbReference>
<dbReference type="FunFam" id="3.40.47.10:FF:000010">
    <property type="entry name" value="Acetyl-CoA acetyltransferase (Thiolase)"/>
    <property type="match status" value="1"/>
</dbReference>
<dbReference type="Gene3D" id="3.40.47.10">
    <property type="match status" value="2"/>
</dbReference>
<dbReference type="HAMAP" id="MF_01620">
    <property type="entry name" value="FadA"/>
    <property type="match status" value="1"/>
</dbReference>
<dbReference type="InterPro" id="IPR012805">
    <property type="entry name" value="FadA"/>
</dbReference>
<dbReference type="InterPro" id="IPR002155">
    <property type="entry name" value="Thiolase"/>
</dbReference>
<dbReference type="InterPro" id="IPR016039">
    <property type="entry name" value="Thiolase-like"/>
</dbReference>
<dbReference type="InterPro" id="IPR050215">
    <property type="entry name" value="Thiolase-like_sf_Thiolase"/>
</dbReference>
<dbReference type="InterPro" id="IPR020615">
    <property type="entry name" value="Thiolase_acyl_enz_int_AS"/>
</dbReference>
<dbReference type="InterPro" id="IPR020617">
    <property type="entry name" value="Thiolase_C"/>
</dbReference>
<dbReference type="InterPro" id="IPR020613">
    <property type="entry name" value="Thiolase_CS"/>
</dbReference>
<dbReference type="InterPro" id="IPR020616">
    <property type="entry name" value="Thiolase_N"/>
</dbReference>
<dbReference type="NCBIfam" id="TIGR01930">
    <property type="entry name" value="AcCoA-C-Actrans"/>
    <property type="match status" value="1"/>
</dbReference>
<dbReference type="NCBIfam" id="TIGR02445">
    <property type="entry name" value="fadA"/>
    <property type="match status" value="1"/>
</dbReference>
<dbReference type="NCBIfam" id="NF006510">
    <property type="entry name" value="PRK08947.1"/>
    <property type="match status" value="1"/>
</dbReference>
<dbReference type="PANTHER" id="PTHR43853:SF11">
    <property type="entry name" value="3-KETOACYL-COA THIOLASE FADA"/>
    <property type="match status" value="1"/>
</dbReference>
<dbReference type="PANTHER" id="PTHR43853">
    <property type="entry name" value="3-KETOACYL-COA THIOLASE, PEROXISOMAL"/>
    <property type="match status" value="1"/>
</dbReference>
<dbReference type="Pfam" id="PF02803">
    <property type="entry name" value="Thiolase_C"/>
    <property type="match status" value="1"/>
</dbReference>
<dbReference type="Pfam" id="PF00108">
    <property type="entry name" value="Thiolase_N"/>
    <property type="match status" value="1"/>
</dbReference>
<dbReference type="PIRSF" id="PIRSF000429">
    <property type="entry name" value="Ac-CoA_Ac_transf"/>
    <property type="match status" value="1"/>
</dbReference>
<dbReference type="SUPFAM" id="SSF53901">
    <property type="entry name" value="Thiolase-like"/>
    <property type="match status" value="2"/>
</dbReference>
<dbReference type="PROSITE" id="PS00098">
    <property type="entry name" value="THIOLASE_1"/>
    <property type="match status" value="1"/>
</dbReference>
<dbReference type="PROSITE" id="PS00737">
    <property type="entry name" value="THIOLASE_2"/>
    <property type="match status" value="1"/>
</dbReference>
<evidence type="ECO:0000255" key="1">
    <source>
        <dbReference type="HAMAP-Rule" id="MF_01620"/>
    </source>
</evidence>
<sequence length="391" mass="41556">MSLNPRDVVIVDFGRTPMGRSKGGMHRNTRAEDMSAHLISKLLERNGKVDPKEVEDVIWGCVNQTLEQGWNIARMASLMTPIPHTSAAQTVSRLCGSSMSALHTAAQAIMTGNGDVFVVGGVEHMGHVSMMHGVDPNPHLSLHAAKASGMMGLTAEMLGKMHGITREQQDLFGLRSHQLAHKATVEGKFKDEIIPMQGYDENGFLKVFDFDETIRPETTLEGLASLKPAFNPKGGTVTAGTSSQITDGASCMIVMSGQRAMDLGIQPLAVIRSMAVAGVDPAIMGYGPVPSTQKALKRAGLTMADIDFIELNEAFAAQALPVLKDLKVLDKMDEKVNLHGGAIALGHPFGCSGARISGTLLNVMKQNGGTLGVATMCVGLGQGITTVFERV</sequence>
<gene>
    <name evidence="1" type="primary">fadA</name>
    <name type="ordered locus">PP_2137</name>
</gene>
<comment type="function">
    <text evidence="1">Catalyzes the final step of fatty acid oxidation in which acetyl-CoA is released and the CoA ester of a fatty acid two carbons shorter is formed.</text>
</comment>
<comment type="catalytic activity">
    <reaction evidence="1">
        <text>an acyl-CoA + acetyl-CoA = a 3-oxoacyl-CoA + CoA</text>
        <dbReference type="Rhea" id="RHEA:21564"/>
        <dbReference type="ChEBI" id="CHEBI:57287"/>
        <dbReference type="ChEBI" id="CHEBI:57288"/>
        <dbReference type="ChEBI" id="CHEBI:58342"/>
        <dbReference type="ChEBI" id="CHEBI:90726"/>
        <dbReference type="EC" id="2.3.1.16"/>
    </reaction>
</comment>
<comment type="pathway">
    <text evidence="1">Lipid metabolism; fatty acid beta-oxidation.</text>
</comment>
<comment type="subunit">
    <text evidence="1">Heterotetramer of two alpha chains (FadB) and two beta chains (FadA).</text>
</comment>
<comment type="subcellular location">
    <subcellularLocation>
        <location evidence="1">Cytoplasm</location>
    </subcellularLocation>
</comment>
<comment type="similarity">
    <text evidence="1">Belongs to the thiolase-like superfamily. Thiolase family.</text>
</comment>
<protein>
    <recommendedName>
        <fullName evidence="1">3-ketoacyl-CoA thiolase</fullName>
        <ecNumber evidence="1">2.3.1.16</ecNumber>
    </recommendedName>
    <alternativeName>
        <fullName evidence="1">Acetyl-CoA acyltransferase</fullName>
    </alternativeName>
    <alternativeName>
        <fullName evidence="1">Beta-ketothiolase</fullName>
    </alternativeName>
    <alternativeName>
        <fullName evidence="1">Fatty acid oxidation complex subunit beta</fullName>
    </alternativeName>
</protein>
<proteinExistence type="inferred from homology"/>